<organism>
    <name type="scientific">Lychas mucronatus</name>
    <name type="common">Chinese swimming scorpion</name>
    <dbReference type="NCBI Taxonomy" id="172552"/>
    <lineage>
        <taxon>Eukaryota</taxon>
        <taxon>Metazoa</taxon>
        <taxon>Ecdysozoa</taxon>
        <taxon>Arthropoda</taxon>
        <taxon>Chelicerata</taxon>
        <taxon>Arachnida</taxon>
        <taxon>Scorpiones</taxon>
        <taxon>Buthida</taxon>
        <taxon>Buthoidea</taxon>
        <taxon>Buthidae</taxon>
        <taxon>Lychas</taxon>
    </lineage>
</organism>
<dbReference type="EMBL" id="EU163858">
    <property type="protein sequence ID" value="ABY26667.1"/>
    <property type="molecule type" value="mRNA"/>
</dbReference>
<dbReference type="SMR" id="D9U2B1"/>
<dbReference type="GO" id="GO:0005576">
    <property type="term" value="C:extracellular region"/>
    <property type="evidence" value="ECO:0007669"/>
    <property type="project" value="UniProtKB-SubCell"/>
</dbReference>
<dbReference type="GO" id="GO:0015459">
    <property type="term" value="F:potassium channel regulator activity"/>
    <property type="evidence" value="ECO:0007669"/>
    <property type="project" value="UniProtKB-KW"/>
</dbReference>
<dbReference type="GO" id="GO:0090729">
    <property type="term" value="F:toxin activity"/>
    <property type="evidence" value="ECO:0007669"/>
    <property type="project" value="UniProtKB-KW"/>
</dbReference>
<dbReference type="InterPro" id="IPR029237">
    <property type="entry name" value="Long_scorpion_toxin_alpha/beta"/>
</dbReference>
<dbReference type="Pfam" id="PF14866">
    <property type="entry name" value="Scorpion_toxin_alpha-beta"/>
    <property type="match status" value="1"/>
</dbReference>
<dbReference type="PROSITE" id="PS51862">
    <property type="entry name" value="BSPN_CSAB"/>
    <property type="match status" value="1"/>
</dbReference>
<sequence>MKQYIFFLALIVLVSTFAEAGKKTEILDKVKKVFSKAKDKILAGVEDLNNMSELGCPFIDKWCEDHCESKKLVGKCENFDCSCVKLGGK</sequence>
<accession>D9U2B1</accession>
<name>KBX22_LYCMC</name>
<keyword id="KW-1015">Disulfide bond</keyword>
<keyword id="KW-0872">Ion channel impairing toxin</keyword>
<keyword id="KW-0528">Neurotoxin</keyword>
<keyword id="KW-0632">Potassium channel impairing toxin</keyword>
<keyword id="KW-0964">Secreted</keyword>
<keyword id="KW-0732">Signal</keyword>
<keyword id="KW-0800">Toxin</keyword>
<protein>
    <recommendedName>
        <fullName>Neurotoxin beta-KTx 12</fullName>
    </recommendedName>
</protein>
<feature type="signal peptide" evidence="3">
    <location>
        <begin position="1"/>
        <end position="20"/>
    </location>
</feature>
<feature type="propeptide" id="PRO_0000403848" evidence="1">
    <location>
        <begin position="21"/>
        <end position="39"/>
    </location>
</feature>
<feature type="chain" id="PRO_0000403849" description="Neurotoxin beta-KTx 12">
    <location>
        <begin position="40"/>
        <end position="89"/>
    </location>
</feature>
<feature type="domain" description="BetaSPN-type CS-alpha/beta" evidence="4">
    <location>
        <begin position="53"/>
        <end position="89"/>
    </location>
</feature>
<feature type="disulfide bond" evidence="4">
    <location>
        <begin position="56"/>
        <end position="76"/>
    </location>
</feature>
<feature type="disulfide bond" evidence="4">
    <location>
        <begin position="63"/>
        <end position="81"/>
    </location>
</feature>
<feature type="disulfide bond" evidence="4">
    <location>
        <begin position="67"/>
        <end position="83"/>
    </location>
</feature>
<reference key="1">
    <citation type="journal article" date="2010" name="BMC Genomics">
        <title>Comparative venom gland transcriptome analysis of the scorpion Lychas mucronatus reveals intraspecific toxic gene diversity and new venomous components.</title>
        <authorList>
            <person name="Zhao R."/>
            <person name="Ma Y."/>
            <person name="He Y."/>
            <person name="Di Z."/>
            <person name="Wu Y.-L."/>
            <person name="Cao Z.-J."/>
            <person name="Li W.-X."/>
        </authorList>
    </citation>
    <scope>NUCLEOTIDE SEQUENCE [MRNA]</scope>
    <source>
        <strain>Hainan</strain>
        <tissue>Venom gland</tissue>
    </source>
</reference>
<comment type="function">
    <text evidence="2">Inhibits voltage-gated potassium channel.</text>
</comment>
<comment type="subcellular location">
    <subcellularLocation>
        <location evidence="6">Secreted</location>
    </subcellularLocation>
</comment>
<comment type="tissue specificity">
    <text evidence="6">Expressed by the venom gland.</text>
</comment>
<comment type="similarity">
    <text evidence="5">Belongs to the long chain scorpion toxin family. Class 2 subfamily.</text>
</comment>
<proteinExistence type="inferred from homology"/>
<evidence type="ECO:0000250" key="1"/>
<evidence type="ECO:0000250" key="2">
    <source>
        <dbReference type="UniProtKB" id="Q9NJC6"/>
    </source>
</evidence>
<evidence type="ECO:0000255" key="3"/>
<evidence type="ECO:0000255" key="4">
    <source>
        <dbReference type="PROSITE-ProRule" id="PRU01209"/>
    </source>
</evidence>
<evidence type="ECO:0000305" key="5"/>
<evidence type="ECO:0000305" key="6">
    <source>
    </source>
</evidence>